<accession>P50739</accession>
<comment type="function">
    <text>Could be a lytic transglycosylase. Required for spore cortex hydrolysis during germination. Interacts strongly but noncovalently with spore components.</text>
</comment>
<comment type="subcellular location">
    <subcellularLocation>
        <location>Forespore</location>
    </subcellularLocation>
    <text>Expressed in the forespore and then transported across the inner forespore membrane and deposited on the outside of the cortex.</text>
</comment>
<comment type="developmental stage">
    <text>Expressed during sporulation and active during germination. Exists as mature but inactive form in the dormant spore.</text>
</comment>
<comment type="induction">
    <text>Expression is sigma G-dependent.</text>
</comment>
<comment type="miscellaneous">
    <text>B.subtilis SleB could not be detected with anti-B.cereus SleB antiserum and vice versa.</text>
</comment>
<comment type="similarity">
    <text evidence="3">Belongs to the SleB family.</text>
</comment>
<gene>
    <name type="primary">sleB</name>
    <name type="synonym">ypeA</name>
    <name type="ordered locus">BSU22930</name>
</gene>
<feature type="signal peptide" evidence="1">
    <location>
        <begin position="1"/>
        <end position="29"/>
    </location>
</feature>
<feature type="chain" id="PRO_0000022358" description="Spore cortex-lytic enzyme">
    <location>
        <begin position="30"/>
        <end position="305"/>
    </location>
</feature>
<feature type="region of interest" description="Disordered" evidence="2">
    <location>
        <begin position="130"/>
        <end position="185"/>
    </location>
</feature>
<feature type="compositionally biased region" description="Basic and acidic residues" evidence="2">
    <location>
        <begin position="142"/>
        <end position="156"/>
    </location>
</feature>
<feature type="compositionally biased region" description="Low complexity" evidence="2">
    <location>
        <begin position="158"/>
        <end position="172"/>
    </location>
</feature>
<organism>
    <name type="scientific">Bacillus subtilis (strain 168)</name>
    <dbReference type="NCBI Taxonomy" id="224308"/>
    <lineage>
        <taxon>Bacteria</taxon>
        <taxon>Bacillati</taxon>
        <taxon>Bacillota</taxon>
        <taxon>Bacilli</taxon>
        <taxon>Bacillales</taxon>
        <taxon>Bacillaceae</taxon>
        <taxon>Bacillus</taxon>
    </lineage>
</organism>
<sequence length="305" mass="34002">MKSKGSIMACLILFSFTITTFINTETISAFSNQVIQRGATGDDVVELQARLQYNGYYNGKIDGVYGWGTYWAVRNFQDQFGLKEVDGLVGAKTKQTLICKSKYYREYVMEQLNKGNTFTHYGKIPLKYQTKPSKAATQKARQQAEARQKQPAEKTTQKPKANANKQQNNTPAKARKQDAVAANMPGGFSNNDIRLLAQAVYGEARGEPYEGQVAIAAVILNRLNSPLFPNSVAGVIFEPLAFTAVADGQIYMQPNETAREAVLDAINGWDPSEEALYYFNPDTATSPWIWGRPQIKRIGKHIFCE</sequence>
<protein>
    <recommendedName>
        <fullName>Spore cortex-lytic enzyme</fullName>
        <shortName>SCLE</shortName>
    </recommendedName>
</protein>
<keyword id="KW-0961">Cell wall biogenesis/degradation</keyword>
<keyword id="KW-0309">Germination</keyword>
<keyword id="KW-0378">Hydrolase</keyword>
<keyword id="KW-1185">Reference proteome</keyword>
<keyword id="KW-0732">Signal</keyword>
<keyword id="KW-0749">Sporulation</keyword>
<dbReference type="EMBL" id="D79978">
    <property type="protein sequence ID" value="BAA11473.1"/>
    <property type="molecule type" value="Genomic_DNA"/>
</dbReference>
<dbReference type="EMBL" id="L47648">
    <property type="protein sequence ID" value="AAC83957.1"/>
    <property type="molecule type" value="Genomic_DNA"/>
</dbReference>
<dbReference type="EMBL" id="AL009126">
    <property type="protein sequence ID" value="CAB14209.1"/>
    <property type="molecule type" value="Genomic_DNA"/>
</dbReference>
<dbReference type="PIR" id="C69708">
    <property type="entry name" value="C69708"/>
</dbReference>
<dbReference type="RefSeq" id="NP_390174.1">
    <property type="nucleotide sequence ID" value="NC_000964.3"/>
</dbReference>
<dbReference type="RefSeq" id="WP_004398523.1">
    <property type="nucleotide sequence ID" value="NZ_OZ025638.1"/>
</dbReference>
<dbReference type="SMR" id="P50739"/>
<dbReference type="FunCoup" id="P50739">
    <property type="interactions" value="68"/>
</dbReference>
<dbReference type="STRING" id="224308.BSU22930"/>
<dbReference type="PaxDb" id="224308-BSU22930"/>
<dbReference type="DNASU" id="938979"/>
<dbReference type="EnsemblBacteria" id="CAB14209">
    <property type="protein sequence ID" value="CAB14209"/>
    <property type="gene ID" value="BSU_22930"/>
</dbReference>
<dbReference type="GeneID" id="938979"/>
<dbReference type="KEGG" id="bsu:BSU22930"/>
<dbReference type="PATRIC" id="fig|224308.179.peg.2500"/>
<dbReference type="eggNOG" id="COG3409">
    <property type="taxonomic scope" value="Bacteria"/>
</dbReference>
<dbReference type="eggNOG" id="COG3773">
    <property type="taxonomic scope" value="Bacteria"/>
</dbReference>
<dbReference type="InParanoid" id="P50739"/>
<dbReference type="OrthoDB" id="9785345at2"/>
<dbReference type="BioCyc" id="BSUB:BSU22930-MONOMER"/>
<dbReference type="Proteomes" id="UP000001570">
    <property type="component" value="Chromosome"/>
</dbReference>
<dbReference type="GO" id="GO:0042763">
    <property type="term" value="C:intracellular immature spore"/>
    <property type="evidence" value="ECO:0007669"/>
    <property type="project" value="UniProtKB-SubCell"/>
</dbReference>
<dbReference type="GO" id="GO:0016787">
    <property type="term" value="F:hydrolase activity"/>
    <property type="evidence" value="ECO:0007669"/>
    <property type="project" value="UniProtKB-KW"/>
</dbReference>
<dbReference type="GO" id="GO:0071555">
    <property type="term" value="P:cell wall organization"/>
    <property type="evidence" value="ECO:0007669"/>
    <property type="project" value="UniProtKB-KW"/>
</dbReference>
<dbReference type="GO" id="GO:0009847">
    <property type="term" value="P:spore germination"/>
    <property type="evidence" value="ECO:0007669"/>
    <property type="project" value="InterPro"/>
</dbReference>
<dbReference type="GO" id="GO:0030435">
    <property type="term" value="P:sporulation resulting in formation of a cellular spore"/>
    <property type="evidence" value="ECO:0007669"/>
    <property type="project" value="UniProtKB-KW"/>
</dbReference>
<dbReference type="FunFam" id="1.10.10.2520:FF:000001">
    <property type="entry name" value="Spore cortex-lytic enzyme"/>
    <property type="match status" value="1"/>
</dbReference>
<dbReference type="FunFam" id="6.20.240.60:FF:000001">
    <property type="entry name" value="Spore cortex-lytic enzyme"/>
    <property type="match status" value="1"/>
</dbReference>
<dbReference type="Gene3D" id="6.20.240.60">
    <property type="match status" value="1"/>
</dbReference>
<dbReference type="Gene3D" id="1.10.10.2520">
    <property type="entry name" value="Cell wall hydrolase SleB, domain 1"/>
    <property type="match status" value="1"/>
</dbReference>
<dbReference type="Gene3D" id="1.10.101.10">
    <property type="entry name" value="PGBD-like superfamily/PGBD"/>
    <property type="match status" value="1"/>
</dbReference>
<dbReference type="InterPro" id="IPR011105">
    <property type="entry name" value="Cell_wall_hydrolase_SleB"/>
</dbReference>
<dbReference type="InterPro" id="IPR002477">
    <property type="entry name" value="Peptidoglycan-bd-like"/>
</dbReference>
<dbReference type="InterPro" id="IPR036365">
    <property type="entry name" value="PGBD-like_sf"/>
</dbReference>
<dbReference type="InterPro" id="IPR036366">
    <property type="entry name" value="PGBDSf"/>
</dbReference>
<dbReference type="InterPro" id="IPR042047">
    <property type="entry name" value="SleB_dom1"/>
</dbReference>
<dbReference type="InterPro" id="IPR014224">
    <property type="entry name" value="Spore_cortex_SleB"/>
</dbReference>
<dbReference type="NCBIfam" id="TIGR02869">
    <property type="entry name" value="spore_SleB"/>
    <property type="match status" value="1"/>
</dbReference>
<dbReference type="Pfam" id="PF07486">
    <property type="entry name" value="Hydrolase_2"/>
    <property type="match status" value="1"/>
</dbReference>
<dbReference type="Pfam" id="PF01471">
    <property type="entry name" value="PG_binding_1"/>
    <property type="match status" value="1"/>
</dbReference>
<dbReference type="SUPFAM" id="SSF47090">
    <property type="entry name" value="PGBD-like"/>
    <property type="match status" value="1"/>
</dbReference>
<proteinExistence type="evidence at protein level"/>
<reference key="1">
    <citation type="journal article" date="1996" name="J. Bacteriol.">
        <title>A gene (sleB) encoding a spore cortex-lytic enzyme from Bacillus subtilis and response of the enzyme to L-alanine-mediated germination.</title>
        <authorList>
            <person name="Moriyama R."/>
            <person name="Hattori A."/>
            <person name="Miyata S."/>
            <person name="Kudoh S."/>
            <person name="Makino S."/>
        </authorList>
    </citation>
    <scope>NUCLEOTIDE SEQUENCE [GENOMIC DNA]</scope>
    <source>
        <strain>168</strain>
    </source>
</reference>
<reference key="2">
    <citation type="journal article" date="1996" name="Microbiology">
        <title>Sequence analysis of the Bacillus subtilis chromosome region between the serA and kdg loci cloned in a yeast artificial chromosome.</title>
        <authorList>
            <person name="Sorokin A.V."/>
            <person name="Azevedo V."/>
            <person name="Zumstein E."/>
            <person name="Galleron N."/>
            <person name="Ehrlich S.D."/>
            <person name="Serror P."/>
        </authorList>
    </citation>
    <scope>NUCLEOTIDE SEQUENCE [GENOMIC DNA]</scope>
    <source>
        <strain>168 / Marburg / ATCC 6051 / DSM 10 / JCM 1465 / NBRC 13719 / NCIMB 3610 / NRRL NRS-744 / VKM B-501</strain>
    </source>
</reference>
<reference key="3">
    <citation type="journal article" date="1997" name="Nature">
        <title>The complete genome sequence of the Gram-positive bacterium Bacillus subtilis.</title>
        <authorList>
            <person name="Kunst F."/>
            <person name="Ogasawara N."/>
            <person name="Moszer I."/>
            <person name="Albertini A.M."/>
            <person name="Alloni G."/>
            <person name="Azevedo V."/>
            <person name="Bertero M.G."/>
            <person name="Bessieres P."/>
            <person name="Bolotin A."/>
            <person name="Borchert S."/>
            <person name="Borriss R."/>
            <person name="Boursier L."/>
            <person name="Brans A."/>
            <person name="Braun M."/>
            <person name="Brignell S.C."/>
            <person name="Bron S."/>
            <person name="Brouillet S."/>
            <person name="Bruschi C.V."/>
            <person name="Caldwell B."/>
            <person name="Capuano V."/>
            <person name="Carter N.M."/>
            <person name="Choi S.-K."/>
            <person name="Codani J.-J."/>
            <person name="Connerton I.F."/>
            <person name="Cummings N.J."/>
            <person name="Daniel R.A."/>
            <person name="Denizot F."/>
            <person name="Devine K.M."/>
            <person name="Duesterhoeft A."/>
            <person name="Ehrlich S.D."/>
            <person name="Emmerson P.T."/>
            <person name="Entian K.-D."/>
            <person name="Errington J."/>
            <person name="Fabret C."/>
            <person name="Ferrari E."/>
            <person name="Foulger D."/>
            <person name="Fritz C."/>
            <person name="Fujita M."/>
            <person name="Fujita Y."/>
            <person name="Fuma S."/>
            <person name="Galizzi A."/>
            <person name="Galleron N."/>
            <person name="Ghim S.-Y."/>
            <person name="Glaser P."/>
            <person name="Goffeau A."/>
            <person name="Golightly E.J."/>
            <person name="Grandi G."/>
            <person name="Guiseppi G."/>
            <person name="Guy B.J."/>
            <person name="Haga K."/>
            <person name="Haiech J."/>
            <person name="Harwood C.R."/>
            <person name="Henaut A."/>
            <person name="Hilbert H."/>
            <person name="Holsappel S."/>
            <person name="Hosono S."/>
            <person name="Hullo M.-F."/>
            <person name="Itaya M."/>
            <person name="Jones L.-M."/>
            <person name="Joris B."/>
            <person name="Karamata D."/>
            <person name="Kasahara Y."/>
            <person name="Klaerr-Blanchard M."/>
            <person name="Klein C."/>
            <person name="Kobayashi Y."/>
            <person name="Koetter P."/>
            <person name="Koningstein G."/>
            <person name="Krogh S."/>
            <person name="Kumano M."/>
            <person name="Kurita K."/>
            <person name="Lapidus A."/>
            <person name="Lardinois S."/>
            <person name="Lauber J."/>
            <person name="Lazarevic V."/>
            <person name="Lee S.-M."/>
            <person name="Levine A."/>
            <person name="Liu H."/>
            <person name="Masuda S."/>
            <person name="Mauel C."/>
            <person name="Medigue C."/>
            <person name="Medina N."/>
            <person name="Mellado R.P."/>
            <person name="Mizuno M."/>
            <person name="Moestl D."/>
            <person name="Nakai S."/>
            <person name="Noback M."/>
            <person name="Noone D."/>
            <person name="O'Reilly M."/>
            <person name="Ogawa K."/>
            <person name="Ogiwara A."/>
            <person name="Oudega B."/>
            <person name="Park S.-H."/>
            <person name="Parro V."/>
            <person name="Pohl T.M."/>
            <person name="Portetelle D."/>
            <person name="Porwollik S."/>
            <person name="Prescott A.M."/>
            <person name="Presecan E."/>
            <person name="Pujic P."/>
            <person name="Purnelle B."/>
            <person name="Rapoport G."/>
            <person name="Rey M."/>
            <person name="Reynolds S."/>
            <person name="Rieger M."/>
            <person name="Rivolta C."/>
            <person name="Rocha E."/>
            <person name="Roche B."/>
            <person name="Rose M."/>
            <person name="Sadaie Y."/>
            <person name="Sato T."/>
            <person name="Scanlan E."/>
            <person name="Schleich S."/>
            <person name="Schroeter R."/>
            <person name="Scoffone F."/>
            <person name="Sekiguchi J."/>
            <person name="Sekowska A."/>
            <person name="Seror S.J."/>
            <person name="Serror P."/>
            <person name="Shin B.-S."/>
            <person name="Soldo B."/>
            <person name="Sorokin A."/>
            <person name="Tacconi E."/>
            <person name="Takagi T."/>
            <person name="Takahashi H."/>
            <person name="Takemaru K."/>
            <person name="Takeuchi M."/>
            <person name="Tamakoshi A."/>
            <person name="Tanaka T."/>
            <person name="Terpstra P."/>
            <person name="Tognoni A."/>
            <person name="Tosato V."/>
            <person name="Uchiyama S."/>
            <person name="Vandenbol M."/>
            <person name="Vannier F."/>
            <person name="Vassarotti A."/>
            <person name="Viari A."/>
            <person name="Wambutt R."/>
            <person name="Wedler E."/>
            <person name="Wedler H."/>
            <person name="Weitzenegger T."/>
            <person name="Winters P."/>
            <person name="Wipat A."/>
            <person name="Yamamoto H."/>
            <person name="Yamane K."/>
            <person name="Yasumoto K."/>
            <person name="Yata K."/>
            <person name="Yoshida K."/>
            <person name="Yoshikawa H.-F."/>
            <person name="Zumstein E."/>
            <person name="Yoshikawa H."/>
            <person name="Danchin A."/>
        </authorList>
    </citation>
    <scope>NUCLEOTIDE SEQUENCE [LARGE SCALE GENOMIC DNA]</scope>
    <source>
        <strain>168</strain>
    </source>
</reference>
<reference key="4">
    <citation type="journal article" date="1999" name="J. Bacteriol.">
        <title>Expression of a germination-specific amidase, SleB, of Bacilli in the forespore compartment of sporulating cells and its localization on the exterior side of the cortex in dormant spores.</title>
        <authorList>
            <person name="Moriyama R."/>
            <person name="Fukuoka H."/>
            <person name="Miyata S."/>
            <person name="Kudoh S."/>
            <person name="Hattori A."/>
            <person name="Kozuka S."/>
            <person name="Yasuda Y."/>
            <person name="Tochikubo K."/>
            <person name="Makino S."/>
        </authorList>
    </citation>
    <scope>CHARACTERIZATION</scope>
    <source>
        <strain>168</strain>
    </source>
</reference>
<reference key="5">
    <citation type="journal article" date="2000" name="Microbiology">
        <title>Complete spore-cortex hydrolysis during germination of Bacillus subtilis 168 requires SleB and YpeB.</title>
        <authorList>
            <person name="Boland F.M."/>
            <person name="Atrih A."/>
            <person name="Chirakkal H."/>
            <person name="Foster S.J."/>
            <person name="Moir A."/>
        </authorList>
    </citation>
    <scope>CHARACTERIZATION</scope>
    <source>
        <strain>168</strain>
    </source>
</reference>
<evidence type="ECO:0000255" key="1"/>
<evidence type="ECO:0000256" key="2">
    <source>
        <dbReference type="SAM" id="MobiDB-lite"/>
    </source>
</evidence>
<evidence type="ECO:0000305" key="3"/>
<name>SLEB_BACSU</name>